<sequence length="231" mass="24066">MKKTLLASSLAVGLGIVAGNAGHEAHASEADLNKASLAQMAQSNDQTLNQKPIEAGAYNYTFDYEGFTYHFESDGTHFAWNYHATGTNGADMSAQAPATNNVAPSAVQANQVQSQEVEAPQNAQTQQPQASTSNNSQVTATPTESKSSEGSSVNVNAHLKQIAQRESGGNIHAVNPTSGAAGKYQFLQSTWDSVAPAKYKGVSPANAPESVQDAAAVKLYNTGGAGHWVTA</sequence>
<name>SCED_STAA3</name>
<feature type="signal peptide" evidence="2">
    <location>
        <begin position="1"/>
        <end position="27"/>
    </location>
</feature>
<feature type="chain" id="PRO_0000320308" description="Probable transglycosylase SceD">
    <location>
        <begin position="28"/>
        <end position="231"/>
    </location>
</feature>
<feature type="region of interest" description="Disordered" evidence="3">
    <location>
        <begin position="106"/>
        <end position="153"/>
    </location>
</feature>
<feature type="compositionally biased region" description="Polar residues" evidence="3">
    <location>
        <begin position="106"/>
        <end position="116"/>
    </location>
</feature>
<feature type="compositionally biased region" description="Low complexity" evidence="3">
    <location>
        <begin position="119"/>
        <end position="137"/>
    </location>
</feature>
<feature type="compositionally biased region" description="Polar residues" evidence="3">
    <location>
        <begin position="138"/>
        <end position="153"/>
    </location>
</feature>
<reference key="1">
    <citation type="journal article" date="2006" name="Lancet">
        <title>Complete genome sequence of USA300, an epidemic clone of community-acquired meticillin-resistant Staphylococcus aureus.</title>
        <authorList>
            <person name="Diep B.A."/>
            <person name="Gill S.R."/>
            <person name="Chang R.F."/>
            <person name="Phan T.H."/>
            <person name="Chen J.H."/>
            <person name="Davidson M.G."/>
            <person name="Lin F."/>
            <person name="Lin J."/>
            <person name="Carleton H.A."/>
            <person name="Mongodin E.F."/>
            <person name="Sensabaugh G.F."/>
            <person name="Perdreau-Remington F."/>
        </authorList>
    </citation>
    <scope>NUCLEOTIDE SEQUENCE [LARGE SCALE GENOMIC DNA]</scope>
    <source>
        <strain>USA300</strain>
    </source>
</reference>
<keyword id="KW-0326">Glycosidase</keyword>
<keyword id="KW-0378">Hydrolase</keyword>
<keyword id="KW-0964">Secreted</keyword>
<keyword id="KW-0732">Signal</keyword>
<proteinExistence type="inferred from homology"/>
<organism>
    <name type="scientific">Staphylococcus aureus (strain USA300)</name>
    <dbReference type="NCBI Taxonomy" id="367830"/>
    <lineage>
        <taxon>Bacteria</taxon>
        <taxon>Bacillati</taxon>
        <taxon>Bacillota</taxon>
        <taxon>Bacilli</taxon>
        <taxon>Bacillales</taxon>
        <taxon>Staphylococcaceae</taxon>
        <taxon>Staphylococcus</taxon>
    </lineage>
</organism>
<protein>
    <recommendedName>
        <fullName>Probable transglycosylase SceD</fullName>
        <ecNumber>3.2.-.-</ecNumber>
    </recommendedName>
</protein>
<comment type="function">
    <text evidence="1">Is able to cleave peptidoglycan and affects clumping and separation of bacterial cells.</text>
</comment>
<comment type="subcellular location">
    <subcellularLocation>
        <location evidence="1">Secreted</location>
    </subcellularLocation>
</comment>
<comment type="induction">
    <text evidence="1">Positively regulated by sigma B factor.</text>
</comment>
<comment type="similarity">
    <text evidence="4">Belongs to the transglycosylase family. SceD subfamily.</text>
</comment>
<accession>Q2FF31</accession>
<dbReference type="EC" id="3.2.-.-"/>
<dbReference type="EMBL" id="CP000255">
    <property type="protein sequence ID" value="ABD22706.1"/>
    <property type="molecule type" value="Genomic_DNA"/>
</dbReference>
<dbReference type="RefSeq" id="WP_000752008.1">
    <property type="nucleotide sequence ID" value="NZ_CP027476.1"/>
</dbReference>
<dbReference type="SMR" id="Q2FF31"/>
<dbReference type="KEGG" id="saa:SAUSA300_2051"/>
<dbReference type="HOGENOM" id="CLU_099865_0_0_9"/>
<dbReference type="Proteomes" id="UP000001939">
    <property type="component" value="Chromosome"/>
</dbReference>
<dbReference type="GO" id="GO:0005576">
    <property type="term" value="C:extracellular region"/>
    <property type="evidence" value="ECO:0007669"/>
    <property type="project" value="UniProtKB-SubCell"/>
</dbReference>
<dbReference type="GO" id="GO:0016798">
    <property type="term" value="F:hydrolase activity, acting on glycosyl bonds"/>
    <property type="evidence" value="ECO:0007669"/>
    <property type="project" value="UniProtKB-KW"/>
</dbReference>
<dbReference type="CDD" id="cd13925">
    <property type="entry name" value="RPF"/>
    <property type="match status" value="1"/>
</dbReference>
<dbReference type="Gene3D" id="1.10.530.10">
    <property type="match status" value="1"/>
</dbReference>
<dbReference type="InterPro" id="IPR023346">
    <property type="entry name" value="Lysozyme-like_dom_sf"/>
</dbReference>
<dbReference type="InterPro" id="IPR010618">
    <property type="entry name" value="RPF"/>
</dbReference>
<dbReference type="Pfam" id="PF06737">
    <property type="entry name" value="Transglycosylas"/>
    <property type="match status" value="1"/>
</dbReference>
<dbReference type="SUPFAM" id="SSF53955">
    <property type="entry name" value="Lysozyme-like"/>
    <property type="match status" value="1"/>
</dbReference>
<gene>
    <name type="primary">sceD</name>
    <name type="ordered locus">SAUSA300_2051</name>
</gene>
<evidence type="ECO:0000250" key="1"/>
<evidence type="ECO:0000255" key="2"/>
<evidence type="ECO:0000256" key="3">
    <source>
        <dbReference type="SAM" id="MobiDB-lite"/>
    </source>
</evidence>
<evidence type="ECO:0000305" key="4"/>